<organism>
    <name type="scientific">Thermosynechococcus vestitus (strain NIES-2133 / IAM M-273 / BP-1)</name>
    <dbReference type="NCBI Taxonomy" id="197221"/>
    <lineage>
        <taxon>Bacteria</taxon>
        <taxon>Bacillati</taxon>
        <taxon>Cyanobacteriota</taxon>
        <taxon>Cyanophyceae</taxon>
        <taxon>Acaryochloridales</taxon>
        <taxon>Thermosynechococcaceae</taxon>
        <taxon>Thermosynechococcus</taxon>
    </lineage>
</organism>
<accession>Q8DLZ6</accession>
<evidence type="ECO:0000255" key="1">
    <source>
        <dbReference type="HAMAP-Rule" id="MF_01954"/>
    </source>
</evidence>
<gene>
    <name evidence="1" type="primary">ureB</name>
    <name type="ordered locus">tll0330</name>
</gene>
<sequence length="101" mass="10989">MIPGELIPAEGTIELNAGRPTVTLTVANTGDRPIQVGSHYHFYEVNPALQFEREQARGMRLDIPAGTAIRFEPGDERVVQLVALGGTRQIYGFRGEVNGAL</sequence>
<keyword id="KW-0963">Cytoplasm</keyword>
<keyword id="KW-0378">Hydrolase</keyword>
<keyword id="KW-1185">Reference proteome</keyword>
<comment type="catalytic activity">
    <reaction evidence="1">
        <text>urea + 2 H2O + H(+) = hydrogencarbonate + 2 NH4(+)</text>
        <dbReference type="Rhea" id="RHEA:20557"/>
        <dbReference type="ChEBI" id="CHEBI:15377"/>
        <dbReference type="ChEBI" id="CHEBI:15378"/>
        <dbReference type="ChEBI" id="CHEBI:16199"/>
        <dbReference type="ChEBI" id="CHEBI:17544"/>
        <dbReference type="ChEBI" id="CHEBI:28938"/>
        <dbReference type="EC" id="3.5.1.5"/>
    </reaction>
</comment>
<comment type="pathway">
    <text evidence="1">Nitrogen metabolism; urea degradation; CO(2) and NH(3) from urea (urease route): step 1/1.</text>
</comment>
<comment type="subunit">
    <text evidence="1">Heterotrimer of UreA (gamma), UreB (beta) and UreC (alpha) subunits. Three heterotrimers associate to form the active enzyme.</text>
</comment>
<comment type="subcellular location">
    <subcellularLocation>
        <location evidence="1">Cytoplasm</location>
    </subcellularLocation>
</comment>
<comment type="similarity">
    <text evidence="1">Belongs to the urease beta subunit family.</text>
</comment>
<feature type="chain" id="PRO_0000234279" description="Urease subunit beta">
    <location>
        <begin position="1"/>
        <end position="101"/>
    </location>
</feature>
<reference key="1">
    <citation type="journal article" date="2002" name="DNA Res.">
        <title>Complete genome structure of the thermophilic cyanobacterium Thermosynechococcus elongatus BP-1.</title>
        <authorList>
            <person name="Nakamura Y."/>
            <person name="Kaneko T."/>
            <person name="Sato S."/>
            <person name="Ikeuchi M."/>
            <person name="Katoh H."/>
            <person name="Sasamoto S."/>
            <person name="Watanabe A."/>
            <person name="Iriguchi M."/>
            <person name="Kawashima K."/>
            <person name="Kimura T."/>
            <person name="Kishida Y."/>
            <person name="Kiyokawa C."/>
            <person name="Kohara M."/>
            <person name="Matsumoto M."/>
            <person name="Matsuno A."/>
            <person name="Nakazaki N."/>
            <person name="Shimpo S."/>
            <person name="Sugimoto M."/>
            <person name="Takeuchi C."/>
            <person name="Yamada M."/>
            <person name="Tabata S."/>
        </authorList>
    </citation>
    <scope>NUCLEOTIDE SEQUENCE [LARGE SCALE GENOMIC DNA]</scope>
    <source>
        <strain>NIES-2133 / IAM M-273 / BP-1</strain>
    </source>
</reference>
<proteinExistence type="inferred from homology"/>
<protein>
    <recommendedName>
        <fullName evidence="1">Urease subunit beta</fullName>
        <ecNumber evidence="1">3.5.1.5</ecNumber>
    </recommendedName>
    <alternativeName>
        <fullName evidence="1">Urea amidohydrolase subunit beta</fullName>
    </alternativeName>
</protein>
<name>URE2_THEVB</name>
<dbReference type="EC" id="3.5.1.5" evidence="1"/>
<dbReference type="EMBL" id="BA000039">
    <property type="protein sequence ID" value="BAC07882.1"/>
    <property type="molecule type" value="Genomic_DNA"/>
</dbReference>
<dbReference type="RefSeq" id="NP_681120.1">
    <property type="nucleotide sequence ID" value="NC_004113.1"/>
</dbReference>
<dbReference type="RefSeq" id="WP_011056185.1">
    <property type="nucleotide sequence ID" value="NC_004113.1"/>
</dbReference>
<dbReference type="SMR" id="Q8DLZ6"/>
<dbReference type="STRING" id="197221.gene:10746913"/>
<dbReference type="EnsemblBacteria" id="BAC07882">
    <property type="protein sequence ID" value="BAC07882"/>
    <property type="gene ID" value="BAC07882"/>
</dbReference>
<dbReference type="KEGG" id="tel:tll0330"/>
<dbReference type="PATRIC" id="fig|197221.4.peg.347"/>
<dbReference type="eggNOG" id="COG0832">
    <property type="taxonomic scope" value="Bacteria"/>
</dbReference>
<dbReference type="UniPathway" id="UPA00258">
    <property type="reaction ID" value="UER00370"/>
</dbReference>
<dbReference type="Proteomes" id="UP000000440">
    <property type="component" value="Chromosome"/>
</dbReference>
<dbReference type="GO" id="GO:0035550">
    <property type="term" value="C:urease complex"/>
    <property type="evidence" value="ECO:0007669"/>
    <property type="project" value="InterPro"/>
</dbReference>
<dbReference type="GO" id="GO:0009039">
    <property type="term" value="F:urease activity"/>
    <property type="evidence" value="ECO:0007669"/>
    <property type="project" value="UniProtKB-UniRule"/>
</dbReference>
<dbReference type="GO" id="GO:0043419">
    <property type="term" value="P:urea catabolic process"/>
    <property type="evidence" value="ECO:0007669"/>
    <property type="project" value="UniProtKB-UniRule"/>
</dbReference>
<dbReference type="CDD" id="cd00407">
    <property type="entry name" value="Urease_beta"/>
    <property type="match status" value="1"/>
</dbReference>
<dbReference type="FunFam" id="2.10.150.10:FF:000001">
    <property type="entry name" value="Urease subunit beta"/>
    <property type="match status" value="1"/>
</dbReference>
<dbReference type="Gene3D" id="2.10.150.10">
    <property type="entry name" value="Urease, beta subunit"/>
    <property type="match status" value="1"/>
</dbReference>
<dbReference type="HAMAP" id="MF_01954">
    <property type="entry name" value="Urease_beta"/>
    <property type="match status" value="1"/>
</dbReference>
<dbReference type="InterPro" id="IPR002019">
    <property type="entry name" value="Urease_beta-like"/>
</dbReference>
<dbReference type="InterPro" id="IPR036461">
    <property type="entry name" value="Urease_betasu_sf"/>
</dbReference>
<dbReference type="InterPro" id="IPR050069">
    <property type="entry name" value="Urease_subunit"/>
</dbReference>
<dbReference type="NCBIfam" id="NF009682">
    <property type="entry name" value="PRK13203.1"/>
    <property type="match status" value="1"/>
</dbReference>
<dbReference type="NCBIfam" id="TIGR00192">
    <property type="entry name" value="urease_beta"/>
    <property type="match status" value="1"/>
</dbReference>
<dbReference type="PANTHER" id="PTHR33569">
    <property type="entry name" value="UREASE"/>
    <property type="match status" value="1"/>
</dbReference>
<dbReference type="PANTHER" id="PTHR33569:SF1">
    <property type="entry name" value="UREASE"/>
    <property type="match status" value="1"/>
</dbReference>
<dbReference type="Pfam" id="PF00699">
    <property type="entry name" value="Urease_beta"/>
    <property type="match status" value="1"/>
</dbReference>
<dbReference type="SUPFAM" id="SSF51278">
    <property type="entry name" value="Urease, beta-subunit"/>
    <property type="match status" value="1"/>
</dbReference>